<feature type="chain" id="PRO_0000239342" description="Gametogenetin">
    <location>
        <begin position="1"/>
        <end position="652"/>
    </location>
</feature>
<feature type="region of interest" description="Disordered" evidence="3">
    <location>
        <begin position="1"/>
        <end position="39"/>
    </location>
</feature>
<feature type="region of interest" description="Disordered" evidence="3">
    <location>
        <begin position="52"/>
        <end position="237"/>
    </location>
</feature>
<feature type="region of interest" description="Interaction with GGNBP1" evidence="1">
    <location>
        <begin position="123"/>
        <end position="486"/>
    </location>
</feature>
<feature type="region of interest" description="Disordered" evidence="3">
    <location>
        <begin position="251"/>
        <end position="273"/>
    </location>
</feature>
<feature type="region of interest" description="Disordered" evidence="3">
    <location>
        <begin position="291"/>
        <end position="473"/>
    </location>
</feature>
<feature type="region of interest" description="Disordered" evidence="3">
    <location>
        <begin position="488"/>
        <end position="576"/>
    </location>
</feature>
<feature type="region of interest" description="Interactions with ZNF403/GGNBP2 and OAZ3" evidence="1">
    <location>
        <begin position="491"/>
        <end position="652"/>
    </location>
</feature>
<feature type="compositionally biased region" description="Basic and acidic residues" evidence="3">
    <location>
        <begin position="18"/>
        <end position="30"/>
    </location>
</feature>
<feature type="compositionally biased region" description="Basic and acidic residues" evidence="3">
    <location>
        <begin position="124"/>
        <end position="133"/>
    </location>
</feature>
<feature type="compositionally biased region" description="Pro residues" evidence="3">
    <location>
        <begin position="138"/>
        <end position="149"/>
    </location>
</feature>
<feature type="compositionally biased region" description="Pro residues" evidence="3">
    <location>
        <begin position="163"/>
        <end position="178"/>
    </location>
</feature>
<feature type="compositionally biased region" description="Polar residues" evidence="3">
    <location>
        <begin position="201"/>
        <end position="212"/>
    </location>
</feature>
<feature type="compositionally biased region" description="Low complexity" evidence="3">
    <location>
        <begin position="213"/>
        <end position="230"/>
    </location>
</feature>
<feature type="compositionally biased region" description="Low complexity" evidence="3">
    <location>
        <begin position="251"/>
        <end position="267"/>
    </location>
</feature>
<feature type="compositionally biased region" description="Low complexity" evidence="3">
    <location>
        <begin position="299"/>
        <end position="312"/>
    </location>
</feature>
<feature type="compositionally biased region" description="Low complexity" evidence="3">
    <location>
        <begin position="407"/>
        <end position="422"/>
    </location>
</feature>
<feature type="compositionally biased region" description="Pro residues" evidence="3">
    <location>
        <begin position="428"/>
        <end position="466"/>
    </location>
</feature>
<feature type="compositionally biased region" description="Pro residues" evidence="3">
    <location>
        <begin position="495"/>
        <end position="513"/>
    </location>
</feature>
<feature type="compositionally biased region" description="Basic residues" evidence="3">
    <location>
        <begin position="523"/>
        <end position="532"/>
    </location>
</feature>
<feature type="compositionally biased region" description="Basic and acidic residues" evidence="3">
    <location>
        <begin position="538"/>
        <end position="552"/>
    </location>
</feature>
<feature type="modified residue" description="Phosphoserine" evidence="2">
    <location>
        <position position="389"/>
    </location>
</feature>
<feature type="splice variant" id="VSP_019166" description="In isoform 2." evidence="7">
    <location>
        <begin position="1"/>
        <end position="83"/>
    </location>
</feature>
<feature type="splice variant" id="VSP_019167" description="In isoform 3." evidence="6">
    <original>SPPTESQAGPRNQGQTAGRARGGAPPHA</original>
    <variation>CVRARTRGCAHQDPHAQEQGFPCSPGRD</variation>
    <location>
        <begin position="197"/>
        <end position="224"/>
    </location>
</feature>
<feature type="splice variant" id="VSP_019168" description="In isoform 3." evidence="6">
    <location>
        <begin position="225"/>
        <end position="652"/>
    </location>
</feature>
<feature type="splice variant" id="VSP_019169" description="In isoform 2." evidence="7">
    <original>K</original>
    <variation>A</variation>
    <location>
        <position position="540"/>
    </location>
</feature>
<feature type="splice variant" id="VSP_019170" description="In isoform 2." evidence="7">
    <location>
        <begin position="541"/>
        <end position="652"/>
    </location>
</feature>
<feature type="sequence conflict" description="In Ref. 1; AAP31500/AAP31501." evidence="7" ref="1">
    <original>P</original>
    <variation>A</variation>
    <location>
        <position position="80"/>
    </location>
</feature>
<feature type="sequence conflict" description="In Ref. 1; DAA00240." evidence="7" ref="1">
    <original>K</original>
    <variation>R</variation>
    <location>
        <position position="113"/>
    </location>
</feature>
<feature type="sequence conflict" description="In Ref. 1; AAP31500/AAP31501." evidence="7" ref="1">
    <original>PP</original>
    <variation>AH</variation>
    <location>
        <begin position="166"/>
        <end position="167"/>
    </location>
</feature>
<feature type="sequence conflict" description="In Ref. 1; AAP31500." evidence="7" ref="1">
    <original>PP</original>
    <variation>SR</variation>
    <location>
        <begin position="174"/>
        <end position="175"/>
    </location>
</feature>
<feature type="sequence conflict" description="In Ref. 1; AAP31500." evidence="7" ref="1">
    <original>P</original>
    <variation>T</variation>
    <location>
        <position position="195"/>
    </location>
</feature>
<feature type="sequence conflict" description="In Ref. 1; AAP31500." evidence="7" ref="1">
    <original>P</original>
    <variation>T</variation>
    <location>
        <position position="198"/>
    </location>
</feature>
<feature type="sequence conflict" description="In Ref. 1; AAP31500." evidence="7" ref="1">
    <original>T</original>
    <variation>K</variation>
    <location>
        <position position="212"/>
    </location>
</feature>
<feature type="sequence conflict" description="In Ref. 1; AAP31500." evidence="7" ref="1">
    <original>G</original>
    <variation>R</variation>
    <location>
        <position position="219"/>
    </location>
</feature>
<protein>
    <recommendedName>
        <fullName>Gametogenetin</fullName>
    </recommendedName>
</protein>
<evidence type="ECO:0000250" key="1"/>
<evidence type="ECO:0000250" key="2">
    <source>
        <dbReference type="UniProtKB" id="Q66HC8"/>
    </source>
</evidence>
<evidence type="ECO:0000256" key="3">
    <source>
        <dbReference type="SAM" id="MobiDB-lite"/>
    </source>
</evidence>
<evidence type="ECO:0000269" key="4">
    <source>
    </source>
</evidence>
<evidence type="ECO:0000269" key="5">
    <source>
    </source>
</evidence>
<evidence type="ECO:0000303" key="6">
    <source>
    </source>
</evidence>
<evidence type="ECO:0000305" key="7"/>
<gene>
    <name type="primary">GGN</name>
</gene>
<organism>
    <name type="scientific">Homo sapiens</name>
    <name type="common">Human</name>
    <dbReference type="NCBI Taxonomy" id="9606"/>
    <lineage>
        <taxon>Eukaryota</taxon>
        <taxon>Metazoa</taxon>
        <taxon>Chordata</taxon>
        <taxon>Craniata</taxon>
        <taxon>Vertebrata</taxon>
        <taxon>Euteleostomi</taxon>
        <taxon>Mammalia</taxon>
        <taxon>Eutheria</taxon>
        <taxon>Euarchontoglires</taxon>
        <taxon>Primates</taxon>
        <taxon>Haplorrhini</taxon>
        <taxon>Catarrhini</taxon>
        <taxon>Hominidae</taxon>
        <taxon>Homo</taxon>
    </lineage>
</organism>
<proteinExistence type="evidence at protein level"/>
<keyword id="KW-0025">Alternative splicing</keyword>
<keyword id="KW-0217">Developmental protein</keyword>
<keyword id="KW-0221">Differentiation</keyword>
<keyword id="KW-0597">Phosphoprotein</keyword>
<keyword id="KW-1267">Proteomics identification</keyword>
<keyword id="KW-1185">Reference proteome</keyword>
<keyword id="KW-0744">Spermatogenesis</keyword>
<reference key="1">
    <citation type="journal article" date="2003" name="J. Biol. Chem.">
        <title>Mouse GGN1 and GGN3, two germ cell-specific proteins from the single gene Ggn, interact with mouse POG and play a role in spermatogenesis.</title>
        <authorList>
            <person name="Lu B."/>
            <person name="Bishop C.E."/>
        </authorList>
    </citation>
    <scope>NUCLEOTIDE SEQUENCE [MRNA] (ISOFORMS 1 AND 3)</scope>
    <scope>ALTERNATIVE SPLICING (ISOFORM 2)</scope>
</reference>
<reference key="2">
    <citation type="journal article" date="2004" name="Nat. Genet.">
        <title>Complete sequencing and characterization of 21,243 full-length human cDNAs.</title>
        <authorList>
            <person name="Ota T."/>
            <person name="Suzuki Y."/>
            <person name="Nishikawa T."/>
            <person name="Otsuki T."/>
            <person name="Sugiyama T."/>
            <person name="Irie R."/>
            <person name="Wakamatsu A."/>
            <person name="Hayashi K."/>
            <person name="Sato H."/>
            <person name="Nagai K."/>
            <person name="Kimura K."/>
            <person name="Makita H."/>
            <person name="Sekine M."/>
            <person name="Obayashi M."/>
            <person name="Nishi T."/>
            <person name="Shibahara T."/>
            <person name="Tanaka T."/>
            <person name="Ishii S."/>
            <person name="Yamamoto J."/>
            <person name="Saito K."/>
            <person name="Kawai Y."/>
            <person name="Isono Y."/>
            <person name="Nakamura Y."/>
            <person name="Nagahari K."/>
            <person name="Murakami K."/>
            <person name="Yasuda T."/>
            <person name="Iwayanagi T."/>
            <person name="Wagatsuma M."/>
            <person name="Shiratori A."/>
            <person name="Sudo H."/>
            <person name="Hosoiri T."/>
            <person name="Kaku Y."/>
            <person name="Kodaira H."/>
            <person name="Kondo H."/>
            <person name="Sugawara M."/>
            <person name="Takahashi M."/>
            <person name="Kanda K."/>
            <person name="Yokoi T."/>
            <person name="Furuya T."/>
            <person name="Kikkawa E."/>
            <person name="Omura Y."/>
            <person name="Abe K."/>
            <person name="Kamihara K."/>
            <person name="Katsuta N."/>
            <person name="Sato K."/>
            <person name="Tanikawa M."/>
            <person name="Yamazaki M."/>
            <person name="Ninomiya K."/>
            <person name="Ishibashi T."/>
            <person name="Yamashita H."/>
            <person name="Murakawa K."/>
            <person name="Fujimori K."/>
            <person name="Tanai H."/>
            <person name="Kimata M."/>
            <person name="Watanabe M."/>
            <person name="Hiraoka S."/>
            <person name="Chiba Y."/>
            <person name="Ishida S."/>
            <person name="Ono Y."/>
            <person name="Takiguchi S."/>
            <person name="Watanabe S."/>
            <person name="Yosida M."/>
            <person name="Hotuta T."/>
            <person name="Kusano J."/>
            <person name="Kanehori K."/>
            <person name="Takahashi-Fujii A."/>
            <person name="Hara H."/>
            <person name="Tanase T.-O."/>
            <person name="Nomura Y."/>
            <person name="Togiya S."/>
            <person name="Komai F."/>
            <person name="Hara R."/>
            <person name="Takeuchi K."/>
            <person name="Arita M."/>
            <person name="Imose N."/>
            <person name="Musashino K."/>
            <person name="Yuuki H."/>
            <person name="Oshima A."/>
            <person name="Sasaki N."/>
            <person name="Aotsuka S."/>
            <person name="Yoshikawa Y."/>
            <person name="Matsunawa H."/>
            <person name="Ichihara T."/>
            <person name="Shiohata N."/>
            <person name="Sano S."/>
            <person name="Moriya S."/>
            <person name="Momiyama H."/>
            <person name="Satoh N."/>
            <person name="Takami S."/>
            <person name="Terashima Y."/>
            <person name="Suzuki O."/>
            <person name="Nakagawa S."/>
            <person name="Senoh A."/>
            <person name="Mizoguchi H."/>
            <person name="Goto Y."/>
            <person name="Shimizu F."/>
            <person name="Wakebe H."/>
            <person name="Hishigaki H."/>
            <person name="Watanabe T."/>
            <person name="Sugiyama A."/>
            <person name="Takemoto M."/>
            <person name="Kawakami B."/>
            <person name="Yamazaki M."/>
            <person name="Watanabe K."/>
            <person name="Kumagai A."/>
            <person name="Itakura S."/>
            <person name="Fukuzumi Y."/>
            <person name="Fujimori Y."/>
            <person name="Komiyama M."/>
            <person name="Tashiro H."/>
            <person name="Tanigami A."/>
            <person name="Fujiwara T."/>
            <person name="Ono T."/>
            <person name="Yamada K."/>
            <person name="Fujii Y."/>
            <person name="Ozaki K."/>
            <person name="Hirao M."/>
            <person name="Ohmori Y."/>
            <person name="Kawabata A."/>
            <person name="Hikiji T."/>
            <person name="Kobatake N."/>
            <person name="Inagaki H."/>
            <person name="Ikema Y."/>
            <person name="Okamoto S."/>
            <person name="Okitani R."/>
            <person name="Kawakami T."/>
            <person name="Noguchi S."/>
            <person name="Itoh T."/>
            <person name="Shigeta K."/>
            <person name="Senba T."/>
            <person name="Matsumura K."/>
            <person name="Nakajima Y."/>
            <person name="Mizuno T."/>
            <person name="Morinaga M."/>
            <person name="Sasaki M."/>
            <person name="Togashi T."/>
            <person name="Oyama M."/>
            <person name="Hata H."/>
            <person name="Watanabe M."/>
            <person name="Komatsu T."/>
            <person name="Mizushima-Sugano J."/>
            <person name="Satoh T."/>
            <person name="Shirai Y."/>
            <person name="Takahashi Y."/>
            <person name="Nakagawa K."/>
            <person name="Okumura K."/>
            <person name="Nagase T."/>
            <person name="Nomura N."/>
            <person name="Kikuchi H."/>
            <person name="Masuho Y."/>
            <person name="Yamashita R."/>
            <person name="Nakai K."/>
            <person name="Yada T."/>
            <person name="Nakamura Y."/>
            <person name="Ohara O."/>
            <person name="Isogai T."/>
            <person name="Sugano S."/>
        </authorList>
    </citation>
    <scope>NUCLEOTIDE SEQUENCE [LARGE SCALE MRNA] (ISOFORM 1)</scope>
    <source>
        <tissue>Testis</tissue>
    </source>
</reference>
<reference key="3">
    <citation type="journal article" date="2004" name="Genome Res.">
        <title>The status, quality, and expansion of the NIH full-length cDNA project: the Mammalian Gene Collection (MGC).</title>
        <authorList>
            <consortium name="The MGC Project Team"/>
        </authorList>
    </citation>
    <scope>NUCLEOTIDE SEQUENCE [LARGE SCALE MRNA] (ISOFORM 1)</scope>
    <source>
        <tissue>Testis</tissue>
    </source>
</reference>
<reference key="4">
    <citation type="journal article" date="2020" name="Hum. Reprod.">
        <title>Exome sequencing reveals novel causes as well as new candidate genes for human globozoospermia.</title>
        <authorList>
            <person name="Oud M.S."/>
            <person name="Okutman O."/>
            <person name="Hendricks L.A.J."/>
            <person name="de Vries P.F."/>
            <person name="Houston B.J."/>
            <person name="Vissers L.E.L.M."/>
            <person name="O'Bryan M.K."/>
            <person name="Ramos L."/>
            <person name="Chemes H.E."/>
            <person name="Viville S."/>
            <person name="Veltman J.A."/>
        </authorList>
    </citation>
    <scope>INVOLVEMENT IN SPGF69</scope>
</reference>
<reference key="5">
    <citation type="journal article" date="2021" name="Hum. Genet.">
        <title>Genetic analyses of a large cohort of infertile patients with globozoospermia, DPY19L2 still the main actor, GGN confirmed as a guest player.</title>
        <authorList>
            <person name="Celse T."/>
            <person name="Cazin C."/>
            <person name="Mietton F."/>
            <person name="Martinez G."/>
            <person name="Martinez D."/>
            <person name="Thierry-Mieg N."/>
            <person name="Septier A."/>
            <person name="Guillemain C."/>
            <person name="Beurois J."/>
            <person name="Clergeau A."/>
            <person name="Mustapha S.F.B."/>
            <person name="Kharouf M."/>
            <person name="Zoghmar A."/>
            <person name="Chargui A."/>
            <person name="Papaxanthos A."/>
            <person name="Dorphin B."/>
            <person name="Foliguet B."/>
            <person name="Triki C."/>
            <person name="Sifer C."/>
            <person name="Lauton D."/>
            <person name="Tachdjian G."/>
            <person name="Schuler G."/>
            <person name="Lejeune H."/>
            <person name="Puechberty J."/>
            <person name="Bessonnat J."/>
            <person name="Pasquier L."/>
            <person name="Mery L."/>
            <person name="Poulain M."/>
            <person name="Chaabouni M."/>
            <person name="Sermondade N."/>
            <person name="Cabry R."/>
            <person name="Benbouhadja S."/>
            <person name="Veau S."/>
            <person name="Frapsauce C."/>
            <person name="Mitchell V."/>
            <person name="Achard V."/>
            <person name="Satre V."/>
            <person name="Hennebicq S."/>
            <person name="Zouari R."/>
            <person name="Arnoult C."/>
            <person name="Kherraf Z.E."/>
            <person name="Coutton C."/>
            <person name="Ray P.F."/>
        </authorList>
    </citation>
    <scope>INVOLVEMENT IN SPGF69</scope>
</reference>
<accession>Q86UU5</accession>
<accession>Q7RTU6</accession>
<accession>Q86UU4</accession>
<accession>Q8NAA1</accession>
<dbReference type="EMBL" id="AF538035">
    <property type="protein sequence ID" value="AAP31500.1"/>
    <property type="molecule type" value="mRNA"/>
</dbReference>
<dbReference type="EMBL" id="AF538036">
    <property type="protein sequence ID" value="AAP31501.1"/>
    <property type="molecule type" value="mRNA"/>
</dbReference>
<dbReference type="EMBL" id="BK000550">
    <property type="protein sequence ID" value="DAA00240.1"/>
    <property type="molecule type" value="mRNA"/>
</dbReference>
<dbReference type="EMBL" id="AK093032">
    <property type="protein sequence ID" value="BAC04025.1"/>
    <property type="molecule type" value="mRNA"/>
</dbReference>
<dbReference type="EMBL" id="BC035008">
    <property type="protein sequence ID" value="AAH35008.1"/>
    <property type="molecule type" value="mRNA"/>
</dbReference>
<dbReference type="CCDS" id="CCDS12516.1">
    <molecule id="Q86UU5-1"/>
</dbReference>
<dbReference type="RefSeq" id="NP_689870.3">
    <molecule id="Q86UU5-1"/>
    <property type="nucleotide sequence ID" value="NM_152657.3"/>
</dbReference>
<dbReference type="RefSeq" id="XP_005258676.1">
    <molecule id="Q86UU5-1"/>
    <property type="nucleotide sequence ID" value="XM_005258619.5"/>
</dbReference>
<dbReference type="RefSeq" id="XP_016881940.1">
    <molecule id="Q86UU5-1"/>
    <property type="nucleotide sequence ID" value="XM_017026451.2"/>
</dbReference>
<dbReference type="RefSeq" id="XP_054176134.1">
    <molecule id="Q86UU5-1"/>
    <property type="nucleotide sequence ID" value="XM_054320159.1"/>
</dbReference>
<dbReference type="BioGRID" id="128266">
    <property type="interactions" value="31"/>
</dbReference>
<dbReference type="FunCoup" id="Q86UU5">
    <property type="interactions" value="12"/>
</dbReference>
<dbReference type="IntAct" id="Q86UU5">
    <property type="interactions" value="19"/>
</dbReference>
<dbReference type="STRING" id="9606.ENSP00000334940"/>
<dbReference type="GlyGen" id="Q86UU5">
    <property type="glycosylation" value="5 sites, 1 O-linked glycan (1 site)"/>
</dbReference>
<dbReference type="iPTMnet" id="Q86UU5"/>
<dbReference type="PhosphoSitePlus" id="Q86UU5"/>
<dbReference type="BioMuta" id="GGN"/>
<dbReference type="DMDM" id="108935993"/>
<dbReference type="jPOST" id="Q86UU5"/>
<dbReference type="MassIVE" id="Q86UU5"/>
<dbReference type="PaxDb" id="9606-ENSP00000334940"/>
<dbReference type="PeptideAtlas" id="Q86UU5"/>
<dbReference type="ProteomicsDB" id="69897">
    <molecule id="Q86UU5-1"/>
</dbReference>
<dbReference type="ProteomicsDB" id="69898">
    <molecule id="Q86UU5-2"/>
</dbReference>
<dbReference type="ProteomicsDB" id="69899">
    <molecule id="Q86UU5-3"/>
</dbReference>
<dbReference type="Antibodypedia" id="30056">
    <property type="antibodies" value="66 antibodies from 17 providers"/>
</dbReference>
<dbReference type="DNASU" id="199720"/>
<dbReference type="Ensembl" id="ENST00000334928.11">
    <molecule id="Q86UU5-1"/>
    <property type="protein sequence ID" value="ENSP00000334940.5"/>
    <property type="gene ID" value="ENSG00000179168.15"/>
</dbReference>
<dbReference type="Ensembl" id="ENST00000585737.1">
    <molecule id="Q86UU5-2"/>
    <property type="protein sequence ID" value="ENSP00000467295.1"/>
    <property type="gene ID" value="ENSG00000179168.15"/>
</dbReference>
<dbReference type="GeneID" id="199720"/>
<dbReference type="KEGG" id="hsa:199720"/>
<dbReference type="MANE-Select" id="ENST00000334928.11">
    <property type="protein sequence ID" value="ENSP00000334940.5"/>
    <property type="RefSeq nucleotide sequence ID" value="NM_152657.4"/>
    <property type="RefSeq protein sequence ID" value="NP_689870.3"/>
</dbReference>
<dbReference type="UCSC" id="uc002oij.2">
    <molecule id="Q86UU5-1"/>
    <property type="organism name" value="human"/>
</dbReference>
<dbReference type="AGR" id="HGNC:18869"/>
<dbReference type="CTD" id="199720"/>
<dbReference type="DisGeNET" id="199720"/>
<dbReference type="GeneCards" id="GGN"/>
<dbReference type="HGNC" id="HGNC:18869">
    <property type="gene designation" value="GGN"/>
</dbReference>
<dbReference type="HPA" id="ENSG00000179168">
    <property type="expression patterns" value="Tissue enriched (testis)"/>
</dbReference>
<dbReference type="MalaCards" id="GGN"/>
<dbReference type="MIM" id="609966">
    <property type="type" value="gene"/>
</dbReference>
<dbReference type="MIM" id="619826">
    <property type="type" value="phenotype"/>
</dbReference>
<dbReference type="neXtProt" id="NX_Q86UU5"/>
<dbReference type="OpenTargets" id="ENSG00000179168"/>
<dbReference type="Orphanet" id="171709">
    <property type="disease" value="Male infertility due to globozoospermia"/>
</dbReference>
<dbReference type="PharmGKB" id="PA134903452"/>
<dbReference type="VEuPathDB" id="HostDB:ENSG00000179168"/>
<dbReference type="eggNOG" id="ENOG502ST22">
    <property type="taxonomic scope" value="Eukaryota"/>
</dbReference>
<dbReference type="GeneTree" id="ENSGT00700000104635"/>
<dbReference type="HOGENOM" id="CLU_031676_0_0_1"/>
<dbReference type="InParanoid" id="Q86UU5"/>
<dbReference type="OMA" id="PPGQMHS"/>
<dbReference type="OrthoDB" id="9424365at2759"/>
<dbReference type="PAN-GO" id="Q86UU5">
    <property type="GO annotations" value="1 GO annotation based on evolutionary models"/>
</dbReference>
<dbReference type="PhylomeDB" id="Q86UU5"/>
<dbReference type="TreeFam" id="TF337083"/>
<dbReference type="PathwayCommons" id="Q86UU5"/>
<dbReference type="SignaLink" id="Q86UU5"/>
<dbReference type="BioGRID-ORCS" id="199720">
    <property type="hits" value="22 hits in 1152 CRISPR screens"/>
</dbReference>
<dbReference type="GenomeRNAi" id="199720"/>
<dbReference type="Pharos" id="Q86UU5">
    <property type="development level" value="Tbio"/>
</dbReference>
<dbReference type="PRO" id="PR:Q86UU5"/>
<dbReference type="Proteomes" id="UP000005640">
    <property type="component" value="Chromosome 19"/>
</dbReference>
<dbReference type="RNAct" id="Q86UU5">
    <property type="molecule type" value="protein"/>
</dbReference>
<dbReference type="Bgee" id="ENSG00000179168">
    <property type="expression patterns" value="Expressed in left testis and 94 other cell types or tissues"/>
</dbReference>
<dbReference type="ExpressionAtlas" id="Q86UU5">
    <property type="expression patterns" value="baseline and differential"/>
</dbReference>
<dbReference type="GO" id="GO:0031625">
    <property type="term" value="F:ubiquitin protein ligase binding"/>
    <property type="evidence" value="ECO:0000318"/>
    <property type="project" value="GO_Central"/>
</dbReference>
<dbReference type="GO" id="GO:0030154">
    <property type="term" value="P:cell differentiation"/>
    <property type="evidence" value="ECO:0007669"/>
    <property type="project" value="UniProtKB-KW"/>
</dbReference>
<dbReference type="GO" id="GO:0006302">
    <property type="term" value="P:double-strand break repair"/>
    <property type="evidence" value="ECO:0007669"/>
    <property type="project" value="InterPro"/>
</dbReference>
<dbReference type="GO" id="GO:0007276">
    <property type="term" value="P:gamete generation"/>
    <property type="evidence" value="ECO:0000250"/>
    <property type="project" value="UniProtKB"/>
</dbReference>
<dbReference type="GO" id="GO:0007283">
    <property type="term" value="P:spermatogenesis"/>
    <property type="evidence" value="ECO:0007669"/>
    <property type="project" value="UniProtKB-KW"/>
</dbReference>
<dbReference type="InterPro" id="IPR031400">
    <property type="entry name" value="GGN"/>
</dbReference>
<dbReference type="PANTHER" id="PTHR47742">
    <property type="entry name" value="GAMETOGENETIN"/>
    <property type="match status" value="1"/>
</dbReference>
<dbReference type="PANTHER" id="PTHR47742:SF1">
    <property type="entry name" value="GAMETOGENETIN"/>
    <property type="match status" value="1"/>
</dbReference>
<dbReference type="Pfam" id="PF15685">
    <property type="entry name" value="GGN"/>
    <property type="match status" value="1"/>
</dbReference>
<name>GGN_HUMAN</name>
<comment type="function">
    <text evidence="1">May be involved in spermatogenesis.</text>
</comment>
<comment type="subunit">
    <text evidence="1">Interacts with FANCL, GGNBP1 and ZNF403/GGNBP2.</text>
</comment>
<comment type="interaction">
    <interactant intactId="EBI-10259069">
        <id>Q86UU5</id>
    </interactant>
    <interactant intactId="EBI-11096309">
        <id>Q9NYB9-2</id>
        <label>ABI2</label>
    </interactant>
    <organismsDiffer>false</organismsDiffer>
    <experiments>3</experiments>
</comment>
<comment type="interaction">
    <interactant intactId="EBI-10259069">
        <id>Q86UU5</id>
    </interactant>
    <interactant intactId="EBI-747185">
        <id>O95817</id>
        <label>BAG3</label>
    </interactant>
    <organismsDiffer>false</organismsDiffer>
    <experiments>3</experiments>
</comment>
<comment type="interaction">
    <interactant intactId="EBI-10259069">
        <id>Q86UU5</id>
    </interactant>
    <interactant intactId="EBI-3867333">
        <id>A8MQ03</id>
        <label>CYSRT1</label>
    </interactant>
    <organismsDiffer>false</organismsDiffer>
    <experiments>3</experiments>
</comment>
<comment type="interaction">
    <interactant intactId="EBI-10259069">
        <id>Q86UU5</id>
    </interactant>
    <interactant intactId="EBI-618309">
        <id>Q08379</id>
        <label>GOLGA2</label>
    </interactant>
    <organismsDiffer>false</organismsDiffer>
    <experiments>3</experiments>
</comment>
<comment type="interaction">
    <interactant intactId="EBI-10259069">
        <id>Q86UU5</id>
    </interactant>
    <interactant intactId="EBI-401755">
        <id>P62993</id>
        <label>GRB2</label>
    </interactant>
    <organismsDiffer>false</organismsDiffer>
    <experiments>3</experiments>
</comment>
<comment type="interaction">
    <interactant intactId="EBI-10259069">
        <id>Q86UU5</id>
    </interactant>
    <interactant intactId="EBI-748420">
        <id>Q9NSC5</id>
        <label>HOMER3</label>
    </interactant>
    <organismsDiffer>false</organismsDiffer>
    <experiments>3</experiments>
</comment>
<comment type="interaction">
    <interactant intactId="EBI-10259069">
        <id>Q86UU5</id>
    </interactant>
    <interactant intactId="EBI-7116203">
        <id>O75031</id>
        <label>HSF2BP</label>
    </interactant>
    <organismsDiffer>false</organismsDiffer>
    <experiments>6</experiments>
</comment>
<comment type="interaction">
    <interactant intactId="EBI-10259069">
        <id>Q86UU5</id>
    </interactant>
    <interactant intactId="EBI-10171697">
        <id>Q6A162</id>
        <label>KRT40</label>
    </interactant>
    <organismsDiffer>false</organismsDiffer>
    <experiments>3</experiments>
</comment>
<comment type="interaction">
    <interactant intactId="EBI-10259069">
        <id>Q86UU5</id>
    </interactant>
    <interactant intactId="EBI-14065470">
        <id>Q9BYR9</id>
        <label>KRTAP2-4</label>
    </interactant>
    <organismsDiffer>false</organismsDiffer>
    <experiments>3</experiments>
</comment>
<comment type="interaction">
    <interactant intactId="EBI-10259069">
        <id>Q86UU5</id>
    </interactant>
    <interactant intactId="EBI-3958099">
        <id>P26371</id>
        <label>KRTAP5-9</label>
    </interactant>
    <organismsDiffer>false</organismsDiffer>
    <experiments>3</experiments>
</comment>
<comment type="interaction">
    <interactant intactId="EBI-10259069">
        <id>Q86UU5</id>
    </interactant>
    <interactant intactId="EBI-11522433">
        <id>Q5JR59-3</id>
        <label>MTUS2</label>
    </interactant>
    <organismsDiffer>false</organismsDiffer>
    <experiments>3</experiments>
</comment>
<comment type="interaction">
    <interactant intactId="EBI-10259069">
        <id>Q86UU5</id>
    </interactant>
    <interactant intactId="EBI-713635">
        <id>O43639</id>
        <label>NCK2</label>
    </interactant>
    <organismsDiffer>false</organismsDiffer>
    <experiments>3</experiments>
</comment>
<comment type="interaction">
    <interactant intactId="EBI-10259069">
        <id>Q86UU5</id>
    </interactant>
    <interactant intactId="EBI-296739">
        <id>P63244</id>
        <label>RACK1</label>
    </interactant>
    <organismsDiffer>false</organismsDiffer>
    <experiments>3</experiments>
</comment>
<comment type="interaction">
    <interactant intactId="EBI-10259069">
        <id>Q86UU5</id>
    </interactant>
    <interactant intactId="EBI-346595">
        <id>Q96B97</id>
        <label>SH3KBP1</label>
    </interactant>
    <organismsDiffer>false</organismsDiffer>
    <experiments>3</experiments>
</comment>
<comment type="interaction">
    <interactant intactId="EBI-10259069">
        <id>Q86UU5</id>
    </interactant>
    <interactant intactId="EBI-743923">
        <id>O00308</id>
        <label>WWP2</label>
    </interactant>
    <organismsDiffer>false</organismsDiffer>
    <experiments>3</experiments>
</comment>
<comment type="interaction">
    <interactant intactId="EBI-10259069">
        <id>Q86UU5</id>
    </interactant>
    <interactant intactId="EBI-746595">
        <id>Q96E35</id>
        <label>ZMYND19</label>
    </interactant>
    <organismsDiffer>false</organismsDiffer>
    <experiments>3</experiments>
</comment>
<comment type="alternative products">
    <event type="alternative splicing"/>
    <isoform>
        <id>Q86UU5-1</id>
        <name>1</name>
        <sequence type="displayed"/>
    </isoform>
    <isoform>
        <id>Q86UU5-2</id>
        <name>2</name>
        <sequence type="described" ref="VSP_019166 VSP_019169 VSP_019170"/>
    </isoform>
    <isoform>
        <id>Q86UU5-3</id>
        <name>3</name>
        <sequence type="described" ref="VSP_019167 VSP_019168"/>
    </isoform>
</comment>
<comment type="disease" evidence="4 5">
    <disease id="DI-06390">
        <name>Spermatogenic failure 69</name>
        <acronym>SPGF69</acronym>
        <description>An autosomal recessive male infertility disorder characterized by low sperm concentrations, globozoospermia, and absence of sperm acrosome.</description>
        <dbReference type="MIM" id="619826"/>
    </disease>
    <text>The disease is caused by variants affecting the gene represented in this entry.</text>
</comment>
<sequence length="652" mass="66699">MGNLQSEPSAGGGSRKVQPSDRAPDSRRTSLVEPEMTSQAMRLTRGLGVWFPGSATPPGLMVPREPQASPSTLPLTLERPSPVMPPPEEAAAVSAPPPAPAGTLLPGPSKWQKPAGTPVPRIRRLLEASHRGQGDPPSLRPLKPPPPPRQLSVKDTVPRAPSQFPPPLETWKPPPPLPSERQPADRRITPALATPASPPTESQAGPRNQGQTAGRARGGAPPHAGEGEMAQPADSESGLSLLCKITFKSRPSLAPPAASSSLAAKASLGGGGGGGLFAASGAISYAEVLKQGPLPPGAARPLGEVSRGAQEAEGGDGDGEGCSGPPSAPASQARALPPPPYTTFPGSKPKFDWVSAPDGPERHFRFNGAGGGIGAPRRRAAALSGPWGSPPPPPEQIHSAPGPRRPAPALLAPPTFIFPAPTNGEPMRPGPPGLQELPPLPPPTPPPTLQPPALQPTPLPVAPPLTPGLGHKESALAPTAAPALPPALAADQAPAPSPAPAPTVAEPSPPVSAPAPAAAPIKTRTRRNKGSRAARGATRKDGLHGDGPRERATATVPDSSGGGGGGSGASQTGAANTRAARHWLPFQVLNSCPCKCYCHHQPRHRRLPRNVSAWLSTSTNHLGEPPWVATIKLSGSLVAKLEHYDLQATHSN</sequence>